<sequence>MGRVRTKTIKKASKVIIEKYYTRLTMDFDTNKRIVEEVAIIPTKPLRNKIAGFVTHLMKRLRHSQVRGISIKLQEEERERRDNYVPDVSALEQDIIEVDPETKEMLKHLDFNNIVVQLTNPTAPGYSNRRN</sequence>
<reference key="1">
    <citation type="submission" date="1999-06" db="EMBL/GenBank/DDBJ databases">
        <title>Subtractive hybridization of Plasmodium falciparum.</title>
        <authorList>
            <person name="Fidock D.A."/>
            <person name="Nguyen T.V."/>
            <person name="James A.A."/>
        </authorList>
    </citation>
    <scope>NUCLEOTIDE SEQUENCE [MRNA]</scope>
    <source>
        <strain>M2</strain>
        <tissue>Salivary gland</tissue>
    </source>
</reference>
<reference key="2">
    <citation type="journal article" date="2002" name="Science">
        <title>The genome sequence of the malaria mosquito Anopheles gambiae.</title>
        <authorList>
            <person name="Holt R.A."/>
            <person name="Subramanian G.M."/>
            <person name="Halpern A."/>
            <person name="Sutton G.G."/>
            <person name="Charlab R."/>
            <person name="Nusskern D.R."/>
            <person name="Wincker P."/>
            <person name="Clark A.G."/>
            <person name="Ribeiro J.M.C."/>
            <person name="Wides R."/>
            <person name="Salzberg S.L."/>
            <person name="Loftus B.J."/>
            <person name="Yandell M.D."/>
            <person name="Majoros W.H."/>
            <person name="Rusch D.B."/>
            <person name="Lai Z."/>
            <person name="Kraft C.L."/>
            <person name="Abril J.F."/>
            <person name="Anthouard V."/>
            <person name="Arensburger P."/>
            <person name="Atkinson P.W."/>
            <person name="Baden H."/>
            <person name="de Berardinis V."/>
            <person name="Baldwin D."/>
            <person name="Benes V."/>
            <person name="Biedler J."/>
            <person name="Blass C."/>
            <person name="Bolanos R."/>
            <person name="Boscus D."/>
            <person name="Barnstead M."/>
            <person name="Cai S."/>
            <person name="Center A."/>
            <person name="Chaturverdi K."/>
            <person name="Christophides G.K."/>
            <person name="Chrystal M.A.M."/>
            <person name="Clamp M."/>
            <person name="Cravchik A."/>
            <person name="Curwen V."/>
            <person name="Dana A."/>
            <person name="Delcher A."/>
            <person name="Dew I."/>
            <person name="Evans C.A."/>
            <person name="Flanigan M."/>
            <person name="Grundschober-Freimoser A."/>
            <person name="Friedli L."/>
            <person name="Gu Z."/>
            <person name="Guan P."/>
            <person name="Guigo R."/>
            <person name="Hillenmeyer M.E."/>
            <person name="Hladun S.L."/>
            <person name="Hogan J.R."/>
            <person name="Hong Y.S."/>
            <person name="Hoover J."/>
            <person name="Jaillon O."/>
            <person name="Ke Z."/>
            <person name="Kodira C.D."/>
            <person name="Kokoza E."/>
            <person name="Koutsos A."/>
            <person name="Letunic I."/>
            <person name="Levitsky A.A."/>
            <person name="Liang Y."/>
            <person name="Lin J.-J."/>
            <person name="Lobo N.F."/>
            <person name="Lopez J.R."/>
            <person name="Malek J.A."/>
            <person name="McIntosh T.C."/>
            <person name="Meister S."/>
            <person name="Miller J.R."/>
            <person name="Mobarry C."/>
            <person name="Mongin E."/>
            <person name="Murphy S.D."/>
            <person name="O'Brochta D.A."/>
            <person name="Pfannkoch C."/>
            <person name="Qi R."/>
            <person name="Regier M.A."/>
            <person name="Remington K."/>
            <person name="Shao H."/>
            <person name="Sharakhova M.V."/>
            <person name="Sitter C.D."/>
            <person name="Shetty J."/>
            <person name="Smith T.J."/>
            <person name="Strong R."/>
            <person name="Sun J."/>
            <person name="Thomasova D."/>
            <person name="Ton L.Q."/>
            <person name="Topalis P."/>
            <person name="Tu Z.J."/>
            <person name="Unger M.F."/>
            <person name="Walenz B."/>
            <person name="Wang A.H."/>
            <person name="Wang J."/>
            <person name="Wang M."/>
            <person name="Wang X."/>
            <person name="Woodford K.J."/>
            <person name="Wortman J.R."/>
            <person name="Wu M."/>
            <person name="Yao A."/>
            <person name="Zdobnov E.M."/>
            <person name="Zhang H."/>
            <person name="Zhao Q."/>
            <person name="Zhao S."/>
            <person name="Zhu S.C."/>
            <person name="Zhimulev I."/>
            <person name="Coluzzi M."/>
            <person name="della Torre A."/>
            <person name="Roth C.W."/>
            <person name="Louis C."/>
            <person name="Kalush F."/>
            <person name="Mural R.J."/>
            <person name="Myers E.W."/>
            <person name="Adams M.D."/>
            <person name="Smith H.O."/>
            <person name="Broder S."/>
            <person name="Gardner M.J."/>
            <person name="Fraser C.M."/>
            <person name="Birney E."/>
            <person name="Bork P."/>
            <person name="Brey P.T."/>
            <person name="Venter J.C."/>
            <person name="Weissenbach J."/>
            <person name="Kafatos F.C."/>
            <person name="Collins F.H."/>
            <person name="Hoffman S.L."/>
        </authorList>
    </citation>
    <scope>NUCLEOTIDE SEQUENCE [LARGE SCALE GENOMIC DNA]</scope>
    <source>
        <strain>PEST</strain>
    </source>
</reference>
<evidence type="ECO:0000250" key="1"/>
<evidence type="ECO:0000305" key="2"/>
<organism>
    <name type="scientific">Anopheles gambiae</name>
    <name type="common">African malaria mosquito</name>
    <dbReference type="NCBI Taxonomy" id="7165"/>
    <lineage>
        <taxon>Eukaryota</taxon>
        <taxon>Metazoa</taxon>
        <taxon>Ecdysozoa</taxon>
        <taxon>Arthropoda</taxon>
        <taxon>Hexapoda</taxon>
        <taxon>Insecta</taxon>
        <taxon>Pterygota</taxon>
        <taxon>Neoptera</taxon>
        <taxon>Endopterygota</taxon>
        <taxon>Diptera</taxon>
        <taxon>Nematocera</taxon>
        <taxon>Culicoidea</taxon>
        <taxon>Culicidae</taxon>
        <taxon>Anophelinae</taxon>
        <taxon>Anopheles</taxon>
    </lineage>
</organism>
<gene>
    <name type="primary">RpS17</name>
    <name type="ORF">AGAP004887</name>
</gene>
<proteinExistence type="evidence at transcript level"/>
<comment type="similarity">
    <text evidence="2">Belongs to the eukaryotic ribosomal protein eS17 family.</text>
</comment>
<protein>
    <recommendedName>
        <fullName evidence="2">Small ribosomal subunit protein eS17</fullName>
    </recommendedName>
    <alternativeName>
        <fullName>40S ribosomal protein S17</fullName>
    </alternativeName>
</protein>
<accession>Q9U9L1</accession>
<accession>Q7PPV1</accession>
<feature type="initiator methionine" description="Removed" evidence="1">
    <location>
        <position position="1"/>
    </location>
</feature>
<feature type="chain" id="PRO_0000141532" description="Small ribosomal subunit protein eS17">
    <location>
        <begin position="2"/>
        <end position="131"/>
    </location>
</feature>
<dbReference type="EMBL" id="AF164153">
    <property type="protein sequence ID" value="AAD47077.1"/>
    <property type="molecule type" value="mRNA"/>
</dbReference>
<dbReference type="EMBL" id="AAAB01008905">
    <property type="protein sequence ID" value="EAA09708.3"/>
    <property type="molecule type" value="Genomic_DNA"/>
</dbReference>
<dbReference type="SMR" id="Q9U9L1"/>
<dbReference type="FunCoup" id="Q9U9L1">
    <property type="interactions" value="1185"/>
</dbReference>
<dbReference type="STRING" id="7165.Q9U9L1"/>
<dbReference type="PaxDb" id="7165-AGAP004887-PA"/>
<dbReference type="EnsemblMetazoa" id="AGAP004887-RA">
    <property type="protein sequence ID" value="AGAP004887-PA"/>
    <property type="gene ID" value="AGAP004887"/>
</dbReference>
<dbReference type="GeneID" id="1275106"/>
<dbReference type="KEGG" id="aga:1275106"/>
<dbReference type="CTD" id="6218"/>
<dbReference type="VEuPathDB" id="VectorBase:AGAMI1_001727"/>
<dbReference type="VEuPathDB" id="VectorBase:AGAP004887"/>
<dbReference type="eggNOG" id="KOG0187">
    <property type="taxonomic scope" value="Eukaryota"/>
</dbReference>
<dbReference type="HOGENOM" id="CLU_112958_2_0_1"/>
<dbReference type="InParanoid" id="Q9U9L1"/>
<dbReference type="OMA" id="MKRIQQG"/>
<dbReference type="PhylomeDB" id="Q9U9L1"/>
<dbReference type="Proteomes" id="UP000007062">
    <property type="component" value="Chromosome 2L"/>
</dbReference>
<dbReference type="GO" id="GO:0005829">
    <property type="term" value="C:cytosol"/>
    <property type="evidence" value="ECO:0007669"/>
    <property type="project" value="UniProtKB-ARBA"/>
</dbReference>
<dbReference type="GO" id="GO:1990904">
    <property type="term" value="C:ribonucleoprotein complex"/>
    <property type="evidence" value="ECO:0007669"/>
    <property type="project" value="UniProtKB-KW"/>
</dbReference>
<dbReference type="GO" id="GO:0005840">
    <property type="term" value="C:ribosome"/>
    <property type="evidence" value="ECO:0007669"/>
    <property type="project" value="UniProtKB-KW"/>
</dbReference>
<dbReference type="GO" id="GO:0003735">
    <property type="term" value="F:structural constituent of ribosome"/>
    <property type="evidence" value="ECO:0007669"/>
    <property type="project" value="InterPro"/>
</dbReference>
<dbReference type="GO" id="GO:0006412">
    <property type="term" value="P:translation"/>
    <property type="evidence" value="ECO:0007669"/>
    <property type="project" value="InterPro"/>
</dbReference>
<dbReference type="FunFam" id="1.10.60.20:FF:000001">
    <property type="entry name" value="40S ribosomal protein S17"/>
    <property type="match status" value="1"/>
</dbReference>
<dbReference type="Gene3D" id="1.10.60.20">
    <property type="entry name" value="Ribosomal protein S17e-like"/>
    <property type="match status" value="1"/>
</dbReference>
<dbReference type="HAMAP" id="MF_00511">
    <property type="entry name" value="Ribosomal_eS17"/>
    <property type="match status" value="1"/>
</dbReference>
<dbReference type="InterPro" id="IPR001210">
    <property type="entry name" value="Ribosomal_eS17"/>
</dbReference>
<dbReference type="InterPro" id="IPR018273">
    <property type="entry name" value="Ribosomal_eS17_CS"/>
</dbReference>
<dbReference type="InterPro" id="IPR036401">
    <property type="entry name" value="Ribosomal_eS17_sf"/>
</dbReference>
<dbReference type="NCBIfam" id="NF002242">
    <property type="entry name" value="PRK01151.1"/>
    <property type="match status" value="1"/>
</dbReference>
<dbReference type="PANTHER" id="PTHR10732">
    <property type="entry name" value="40S RIBOSOMAL PROTEIN S17"/>
    <property type="match status" value="1"/>
</dbReference>
<dbReference type="PANTHER" id="PTHR10732:SF0">
    <property type="entry name" value="40S RIBOSOMAL PROTEIN S17"/>
    <property type="match status" value="1"/>
</dbReference>
<dbReference type="Pfam" id="PF00833">
    <property type="entry name" value="Ribosomal_S17e"/>
    <property type="match status" value="1"/>
</dbReference>
<dbReference type="SUPFAM" id="SSF116820">
    <property type="entry name" value="Rps17e-like"/>
    <property type="match status" value="1"/>
</dbReference>
<dbReference type="PROSITE" id="PS00712">
    <property type="entry name" value="RIBOSOMAL_S17E"/>
    <property type="match status" value="1"/>
</dbReference>
<keyword id="KW-1185">Reference proteome</keyword>
<keyword id="KW-0687">Ribonucleoprotein</keyword>
<keyword id="KW-0689">Ribosomal protein</keyword>
<name>RS17_ANOGA</name>